<dbReference type="EC" id="2.7.7.6" evidence="1"/>
<dbReference type="EMBL" id="AP009373">
    <property type="protein sequence ID" value="BAF50365.1"/>
    <property type="molecule type" value="Genomic_DNA"/>
</dbReference>
<dbReference type="RefSeq" id="YP_001123541.1">
    <property type="nucleotide sequence ID" value="NC_009272.1"/>
</dbReference>
<dbReference type="SMR" id="A4QL10"/>
<dbReference type="GeneID" id="4964788"/>
<dbReference type="GO" id="GO:0009507">
    <property type="term" value="C:chloroplast"/>
    <property type="evidence" value="ECO:0007669"/>
    <property type="project" value="UniProtKB-SubCell"/>
</dbReference>
<dbReference type="GO" id="GO:0000428">
    <property type="term" value="C:DNA-directed RNA polymerase complex"/>
    <property type="evidence" value="ECO:0007669"/>
    <property type="project" value="UniProtKB-KW"/>
</dbReference>
<dbReference type="GO" id="GO:0005739">
    <property type="term" value="C:mitochondrion"/>
    <property type="evidence" value="ECO:0007669"/>
    <property type="project" value="GOC"/>
</dbReference>
<dbReference type="GO" id="GO:0003677">
    <property type="term" value="F:DNA binding"/>
    <property type="evidence" value="ECO:0007669"/>
    <property type="project" value="UniProtKB-UniRule"/>
</dbReference>
<dbReference type="GO" id="GO:0003899">
    <property type="term" value="F:DNA-directed RNA polymerase activity"/>
    <property type="evidence" value="ECO:0007669"/>
    <property type="project" value="UniProtKB-UniRule"/>
</dbReference>
<dbReference type="GO" id="GO:0000287">
    <property type="term" value="F:magnesium ion binding"/>
    <property type="evidence" value="ECO:0007669"/>
    <property type="project" value="UniProtKB-UniRule"/>
</dbReference>
<dbReference type="GO" id="GO:0008270">
    <property type="term" value="F:zinc ion binding"/>
    <property type="evidence" value="ECO:0007669"/>
    <property type="project" value="UniProtKB-UniRule"/>
</dbReference>
<dbReference type="GO" id="GO:0006351">
    <property type="term" value="P:DNA-templated transcription"/>
    <property type="evidence" value="ECO:0007669"/>
    <property type="project" value="UniProtKB-UniRule"/>
</dbReference>
<dbReference type="FunFam" id="1.10.40.90:FF:000002">
    <property type="entry name" value="DNA-directed RNA polymerase subunit"/>
    <property type="match status" value="1"/>
</dbReference>
<dbReference type="FunFam" id="4.10.860.120:FF:000007">
    <property type="entry name" value="DNA-directed RNA polymerase subunit gamma"/>
    <property type="match status" value="1"/>
</dbReference>
<dbReference type="Gene3D" id="1.10.40.90">
    <property type="match status" value="1"/>
</dbReference>
<dbReference type="Gene3D" id="2.40.40.20">
    <property type="match status" value="1"/>
</dbReference>
<dbReference type="Gene3D" id="4.10.860.120">
    <property type="entry name" value="RNA polymerase II, clamp domain"/>
    <property type="match status" value="1"/>
</dbReference>
<dbReference type="Gene3D" id="1.10.274.100">
    <property type="entry name" value="RNA polymerase Rpb1, domain 3"/>
    <property type="match status" value="1"/>
</dbReference>
<dbReference type="HAMAP" id="MF_01323">
    <property type="entry name" value="RNApol_bact_RpoC1"/>
    <property type="match status" value="1"/>
</dbReference>
<dbReference type="InterPro" id="IPR045867">
    <property type="entry name" value="DNA-dir_RpoC_beta_prime"/>
</dbReference>
<dbReference type="InterPro" id="IPR000722">
    <property type="entry name" value="RNA_pol_asu"/>
</dbReference>
<dbReference type="InterPro" id="IPR006592">
    <property type="entry name" value="RNA_pol_N"/>
</dbReference>
<dbReference type="InterPro" id="IPR007080">
    <property type="entry name" value="RNA_pol_Rpb1_1"/>
</dbReference>
<dbReference type="InterPro" id="IPR042102">
    <property type="entry name" value="RNA_pol_Rpb1_3_sf"/>
</dbReference>
<dbReference type="InterPro" id="IPR044893">
    <property type="entry name" value="RNA_pol_Rpb1_clamp_domain"/>
</dbReference>
<dbReference type="InterPro" id="IPR034678">
    <property type="entry name" value="RNApol_RpoC1"/>
</dbReference>
<dbReference type="PANTHER" id="PTHR19376">
    <property type="entry name" value="DNA-DIRECTED RNA POLYMERASE"/>
    <property type="match status" value="1"/>
</dbReference>
<dbReference type="PANTHER" id="PTHR19376:SF54">
    <property type="entry name" value="DNA-DIRECTED RNA POLYMERASE SUBUNIT BETA"/>
    <property type="match status" value="1"/>
</dbReference>
<dbReference type="Pfam" id="PF04997">
    <property type="entry name" value="RNA_pol_Rpb1_1"/>
    <property type="match status" value="1"/>
</dbReference>
<dbReference type="Pfam" id="PF00623">
    <property type="entry name" value="RNA_pol_Rpb1_2"/>
    <property type="match status" value="2"/>
</dbReference>
<dbReference type="SMART" id="SM00663">
    <property type="entry name" value="RPOLA_N"/>
    <property type="match status" value="1"/>
</dbReference>
<dbReference type="SUPFAM" id="SSF64484">
    <property type="entry name" value="beta and beta-prime subunits of DNA dependent RNA-polymerase"/>
    <property type="match status" value="1"/>
</dbReference>
<accession>A4QL10</accession>
<comment type="function">
    <text evidence="1">DNA-dependent RNA polymerase catalyzes the transcription of DNA into RNA using the four ribonucleoside triphosphates as substrates.</text>
</comment>
<comment type="catalytic activity">
    <reaction evidence="1">
        <text>RNA(n) + a ribonucleoside 5'-triphosphate = RNA(n+1) + diphosphate</text>
        <dbReference type="Rhea" id="RHEA:21248"/>
        <dbReference type="Rhea" id="RHEA-COMP:14527"/>
        <dbReference type="Rhea" id="RHEA-COMP:17342"/>
        <dbReference type="ChEBI" id="CHEBI:33019"/>
        <dbReference type="ChEBI" id="CHEBI:61557"/>
        <dbReference type="ChEBI" id="CHEBI:140395"/>
        <dbReference type="EC" id="2.7.7.6"/>
    </reaction>
</comment>
<comment type="cofactor">
    <cofactor evidence="1">
        <name>Mg(2+)</name>
        <dbReference type="ChEBI" id="CHEBI:18420"/>
    </cofactor>
    <text evidence="1">Binds 1 Mg(2+) ion per subunit.</text>
</comment>
<comment type="cofactor">
    <cofactor evidence="1">
        <name>Zn(2+)</name>
        <dbReference type="ChEBI" id="CHEBI:29105"/>
    </cofactor>
    <text evidence="1">Binds 1 Zn(2+) ion per subunit.</text>
</comment>
<comment type="subunit">
    <text evidence="1">In plastids the minimal PEP RNA polymerase catalytic core is composed of four subunits: alpha, beta, beta', and beta''. When a (nuclear-encoded) sigma factor is associated with the core the holoenzyme is formed, which can initiate transcription.</text>
</comment>
<comment type="subcellular location">
    <subcellularLocation>
        <location evidence="1">Plastid</location>
        <location evidence="1">Chloroplast</location>
    </subcellularLocation>
</comment>
<comment type="similarity">
    <text evidence="1">Belongs to the RNA polymerase beta' chain family. RpoC1 subfamily.</text>
</comment>
<protein>
    <recommendedName>
        <fullName evidence="1">DNA-directed RNA polymerase subunit beta'</fullName>
        <ecNumber evidence="1">2.7.7.6</ecNumber>
    </recommendedName>
    <alternativeName>
        <fullName evidence="1">PEP</fullName>
    </alternativeName>
    <alternativeName>
        <fullName evidence="1">Plastid-encoded RNA polymerase subunit beta'</fullName>
        <shortName evidence="1">RNA polymerase subunit beta'</shortName>
    </alternativeName>
</protein>
<gene>
    <name evidence="1" type="primary">rpoC1</name>
</gene>
<reference key="1">
    <citation type="submission" date="2007-03" db="EMBL/GenBank/DDBJ databases">
        <title>Sequencing analysis of Draba nemoroza chloroplast DNA.</title>
        <authorList>
            <person name="Hosouchi T."/>
            <person name="Tsuruoka H."/>
            <person name="Kotani H."/>
        </authorList>
    </citation>
    <scope>NUCLEOTIDE SEQUENCE [LARGE SCALE GENOMIC DNA]</scope>
</reference>
<evidence type="ECO:0000255" key="1">
    <source>
        <dbReference type="HAMAP-Rule" id="MF_01323"/>
    </source>
</evidence>
<name>RPOC1_DRANE</name>
<sequence length="680" mass="78539">MIDRYKHQQLRIGLVSPQQISAWATKKIPNGEIVGEVTKPYTFHYKTNKPEKDGLFCERIFGPIKSGICACGNYRVIGDEKEDPKFCEQCGVEFVDSRIRRYQMGYIKLTCPVTHVWYLKRLPSYIANLLDKPLKELEGLVYCDFSFARPITKKPTFLRLRGSFEYEIQSWKYSIPLFFTTQGFDIFRNREISTGAGAIREQLADLDLRIIIENSLVEWKQLGEEGPTGNEWEDRKIVRRKDFLVRRMELAKHFIRTNIEPEWMVLCLLPVLPPELRPIIQIEGGKLMSSDINELYRRVIYRNNTLTDLLTTSRSTPGELVMCQEKLVQEAVDTLLDNGIRGQPMRDGHNKVYKSFSDVIEGKEGRFRETLLGKRVDYSGRSVIVVGPSLSLHRCGLPREIAIELFQTFVIRGLIRQHLASNIGVAKSQIREKKPIVWEILQEVMQGHPVLLNRAPTLHRLGIQSFQPILVEGRTICLHPLVCKGFNADFDGDQMAVHVPLSLEAQAEARLLMFSHMNLLSPAIGDPISVPTQDMLIGLYVLTSGTRRGICANRYNPCNRKNDKNEKLYETNYKYMKEPFFCNSYDAIGAYRQKRINLDSPLWLRWQLDQRVIASREVPIEVHYESFGNYHEIYAHYLIVRSVKKETFCIYIRTTAGHISFYREIEEAIQGFSQACSYDT</sequence>
<feature type="chain" id="PRO_0000353488" description="DNA-directed RNA polymerase subunit beta'">
    <location>
        <begin position="1"/>
        <end position="680"/>
    </location>
</feature>
<feature type="binding site" evidence="1">
    <location>
        <position position="69"/>
    </location>
    <ligand>
        <name>Zn(2+)</name>
        <dbReference type="ChEBI" id="CHEBI:29105"/>
    </ligand>
</feature>
<feature type="binding site" evidence="1">
    <location>
        <position position="71"/>
    </location>
    <ligand>
        <name>Zn(2+)</name>
        <dbReference type="ChEBI" id="CHEBI:29105"/>
    </ligand>
</feature>
<feature type="binding site" evidence="1">
    <location>
        <position position="87"/>
    </location>
    <ligand>
        <name>Zn(2+)</name>
        <dbReference type="ChEBI" id="CHEBI:29105"/>
    </ligand>
</feature>
<feature type="binding site" evidence="1">
    <location>
        <position position="90"/>
    </location>
    <ligand>
        <name>Zn(2+)</name>
        <dbReference type="ChEBI" id="CHEBI:29105"/>
    </ligand>
</feature>
<feature type="binding site" evidence="1">
    <location>
        <position position="489"/>
    </location>
    <ligand>
        <name>Mg(2+)</name>
        <dbReference type="ChEBI" id="CHEBI:18420"/>
    </ligand>
</feature>
<feature type="binding site" evidence="1">
    <location>
        <position position="491"/>
    </location>
    <ligand>
        <name>Mg(2+)</name>
        <dbReference type="ChEBI" id="CHEBI:18420"/>
    </ligand>
</feature>
<feature type="binding site" evidence="1">
    <location>
        <position position="493"/>
    </location>
    <ligand>
        <name>Mg(2+)</name>
        <dbReference type="ChEBI" id="CHEBI:18420"/>
    </ligand>
</feature>
<organism>
    <name type="scientific">Draba nemorosa</name>
    <name type="common">Woodland whitlowgrass</name>
    <dbReference type="NCBI Taxonomy" id="171822"/>
    <lineage>
        <taxon>Eukaryota</taxon>
        <taxon>Viridiplantae</taxon>
        <taxon>Streptophyta</taxon>
        <taxon>Embryophyta</taxon>
        <taxon>Tracheophyta</taxon>
        <taxon>Spermatophyta</taxon>
        <taxon>Magnoliopsida</taxon>
        <taxon>eudicotyledons</taxon>
        <taxon>Gunneridae</taxon>
        <taxon>Pentapetalae</taxon>
        <taxon>rosids</taxon>
        <taxon>malvids</taxon>
        <taxon>Brassicales</taxon>
        <taxon>Brassicaceae</taxon>
        <taxon>Arabideae</taxon>
        <taxon>Draba</taxon>
    </lineage>
</organism>
<geneLocation type="chloroplast"/>
<proteinExistence type="inferred from homology"/>
<keyword id="KW-0150">Chloroplast</keyword>
<keyword id="KW-0240">DNA-directed RNA polymerase</keyword>
<keyword id="KW-0460">Magnesium</keyword>
<keyword id="KW-0479">Metal-binding</keyword>
<keyword id="KW-0548">Nucleotidyltransferase</keyword>
<keyword id="KW-0934">Plastid</keyword>
<keyword id="KW-0804">Transcription</keyword>
<keyword id="KW-0808">Transferase</keyword>
<keyword id="KW-0862">Zinc</keyword>